<reference key="1">
    <citation type="submission" date="2008-10" db="EMBL/GenBank/DDBJ databases">
        <title>Genome sequence of Bacillus cereus G9842.</title>
        <authorList>
            <person name="Dodson R.J."/>
            <person name="Durkin A.S."/>
            <person name="Rosovitz M.J."/>
            <person name="Rasko D.A."/>
            <person name="Hoffmaster A."/>
            <person name="Ravel J."/>
            <person name="Sutton G."/>
        </authorList>
    </citation>
    <scope>NUCLEOTIDE SEQUENCE [LARGE SCALE GENOMIC DNA]</scope>
    <source>
        <strain>G9842</strain>
    </source>
</reference>
<proteinExistence type="inferred from homology"/>
<organism>
    <name type="scientific">Bacillus cereus (strain G9842)</name>
    <dbReference type="NCBI Taxonomy" id="405531"/>
    <lineage>
        <taxon>Bacteria</taxon>
        <taxon>Bacillati</taxon>
        <taxon>Bacillota</taxon>
        <taxon>Bacilli</taxon>
        <taxon>Bacillales</taxon>
        <taxon>Bacillaceae</taxon>
        <taxon>Bacillus</taxon>
        <taxon>Bacillus cereus group</taxon>
    </lineage>
</organism>
<sequence length="156" mass="17723">MSWSKVKYFFFDTPEEKEAAQYGYEKEQTDMKKQQDPPEQQDVTFPKAQPKQNVVSIETAKQSSKVVLLEPRTYSEAQGIADHLKGRRAVVINLQRMSTDQAVRIVDFLSGTVYAIGGDIQKIGPKTFMCTPENVDIVGAISELFGEEEETNIKRW</sequence>
<dbReference type="EMBL" id="CP001186">
    <property type="protein sequence ID" value="ACK97372.1"/>
    <property type="molecule type" value="Genomic_DNA"/>
</dbReference>
<dbReference type="RefSeq" id="WP_000119129.1">
    <property type="nucleotide sequence ID" value="NC_011772.1"/>
</dbReference>
<dbReference type="SMR" id="B7IUQ9"/>
<dbReference type="KEGG" id="bcg:BCG9842_B1241"/>
<dbReference type="HOGENOM" id="CLU_078499_4_1_9"/>
<dbReference type="Proteomes" id="UP000006744">
    <property type="component" value="Chromosome"/>
</dbReference>
<dbReference type="GO" id="GO:0005737">
    <property type="term" value="C:cytoplasm"/>
    <property type="evidence" value="ECO:0007669"/>
    <property type="project" value="UniProtKB-SubCell"/>
</dbReference>
<dbReference type="GO" id="GO:0000917">
    <property type="term" value="P:division septum assembly"/>
    <property type="evidence" value="ECO:0007669"/>
    <property type="project" value="UniProtKB-KW"/>
</dbReference>
<dbReference type="GO" id="GO:0043093">
    <property type="term" value="P:FtsZ-dependent cytokinesis"/>
    <property type="evidence" value="ECO:0007669"/>
    <property type="project" value="UniProtKB-UniRule"/>
</dbReference>
<dbReference type="Gene3D" id="3.30.110.150">
    <property type="entry name" value="SepF-like protein"/>
    <property type="match status" value="1"/>
</dbReference>
<dbReference type="HAMAP" id="MF_01197">
    <property type="entry name" value="SepF"/>
    <property type="match status" value="1"/>
</dbReference>
<dbReference type="InterPro" id="IPR023052">
    <property type="entry name" value="Cell_div_SepF"/>
</dbReference>
<dbReference type="InterPro" id="IPR007561">
    <property type="entry name" value="Cell_div_SepF/SepF-rel"/>
</dbReference>
<dbReference type="InterPro" id="IPR038594">
    <property type="entry name" value="SepF-like_sf"/>
</dbReference>
<dbReference type="PANTHER" id="PTHR35798">
    <property type="entry name" value="CELL DIVISION PROTEIN SEPF"/>
    <property type="match status" value="1"/>
</dbReference>
<dbReference type="PANTHER" id="PTHR35798:SF1">
    <property type="entry name" value="CELL DIVISION PROTEIN SEPF"/>
    <property type="match status" value="1"/>
</dbReference>
<dbReference type="Pfam" id="PF04472">
    <property type="entry name" value="SepF"/>
    <property type="match status" value="1"/>
</dbReference>
<evidence type="ECO:0000255" key="1">
    <source>
        <dbReference type="HAMAP-Rule" id="MF_01197"/>
    </source>
</evidence>
<evidence type="ECO:0000256" key="2">
    <source>
        <dbReference type="SAM" id="MobiDB-lite"/>
    </source>
</evidence>
<gene>
    <name evidence="1" type="primary">sepF</name>
    <name type="ordered locus">BCG9842_B1241</name>
</gene>
<keyword id="KW-0131">Cell cycle</keyword>
<keyword id="KW-0132">Cell division</keyword>
<keyword id="KW-0963">Cytoplasm</keyword>
<keyword id="KW-0717">Septation</keyword>
<comment type="function">
    <text evidence="1">Cell division protein that is part of the divisome complex and is recruited early to the Z-ring. Probably stimulates Z-ring formation, perhaps through the cross-linking of FtsZ protofilaments. Its function overlaps with FtsA.</text>
</comment>
<comment type="subunit">
    <text evidence="1">Homodimer. Interacts with FtsZ.</text>
</comment>
<comment type="subcellular location">
    <subcellularLocation>
        <location evidence="1">Cytoplasm</location>
    </subcellularLocation>
    <text evidence="1">Localizes to the division site, in a FtsZ-dependent manner.</text>
</comment>
<comment type="similarity">
    <text evidence="1">Belongs to the SepF family.</text>
</comment>
<protein>
    <recommendedName>
        <fullName evidence="1">Cell division protein SepF</fullName>
    </recommendedName>
</protein>
<accession>B7IUQ9</accession>
<feature type="chain" id="PRO_1000138459" description="Cell division protein SepF">
    <location>
        <begin position="1"/>
        <end position="156"/>
    </location>
</feature>
<feature type="region of interest" description="Disordered" evidence="2">
    <location>
        <begin position="20"/>
        <end position="50"/>
    </location>
</feature>
<feature type="compositionally biased region" description="Basic and acidic residues" evidence="2">
    <location>
        <begin position="20"/>
        <end position="36"/>
    </location>
</feature>
<name>SEPF_BACC2</name>